<keyword id="KW-0929">Antimicrobial</keyword>
<keyword id="KW-1015">Disulfide bond</keyword>
<keyword id="KW-0295">Fungicide</keyword>
<keyword id="KW-0611">Plant defense</keyword>
<keyword id="KW-1185">Reference proteome</keyword>
<keyword id="KW-0964">Secreted</keyword>
<keyword id="KW-0732">Signal</keyword>
<reference evidence="3" key="1">
    <citation type="journal article" date="1999" name="Nature">
        <title>Sequence and analysis of chromosome 2 of the plant Arabidopsis thaliana.</title>
        <authorList>
            <person name="Lin X."/>
            <person name="Kaul S."/>
            <person name="Rounsley S.D."/>
            <person name="Shea T.P."/>
            <person name="Benito M.-I."/>
            <person name="Town C.D."/>
            <person name="Fujii C.Y."/>
            <person name="Mason T.M."/>
            <person name="Bowman C.L."/>
            <person name="Barnstead M.E."/>
            <person name="Feldblyum T.V."/>
            <person name="Buell C.R."/>
            <person name="Ketchum K.A."/>
            <person name="Lee J.J."/>
            <person name="Ronning C.M."/>
            <person name="Koo H.L."/>
            <person name="Moffat K.S."/>
            <person name="Cronin L.A."/>
            <person name="Shen M."/>
            <person name="Pai G."/>
            <person name="Van Aken S."/>
            <person name="Umayam L."/>
            <person name="Tallon L.J."/>
            <person name="Gill J.E."/>
            <person name="Adams M.D."/>
            <person name="Carrera A.J."/>
            <person name="Creasy T.H."/>
            <person name="Goodman H.M."/>
            <person name="Somerville C.R."/>
            <person name="Copenhaver G.P."/>
            <person name="Preuss D."/>
            <person name="Nierman W.C."/>
            <person name="White O."/>
            <person name="Eisen J.A."/>
            <person name="Salzberg S.L."/>
            <person name="Fraser C.M."/>
            <person name="Venter J.C."/>
        </authorList>
    </citation>
    <scope>NUCLEOTIDE SEQUENCE [LARGE SCALE GENOMIC DNA]</scope>
    <source>
        <strain>cv. Columbia</strain>
    </source>
</reference>
<reference key="2">
    <citation type="journal article" date="2017" name="Plant J.">
        <title>Araport11: a complete reannotation of the Arabidopsis thaliana reference genome.</title>
        <authorList>
            <person name="Cheng C.Y."/>
            <person name="Krishnakumar V."/>
            <person name="Chan A.P."/>
            <person name="Thibaud-Nissen F."/>
            <person name="Schobel S."/>
            <person name="Town C.D."/>
        </authorList>
    </citation>
    <scope>GENOME REANNOTATION</scope>
    <source>
        <strain>cv. Columbia</strain>
    </source>
</reference>
<reference evidence="3" key="3">
    <citation type="journal article" date="2001" name="Plant Mol. Biol.">
        <title>Two large Arabidopsis thaliana gene families are homologous to the Brassica gene superfamily that encodes pollen coat proteins and the male component of the self-incompatibility response.</title>
        <authorList>
            <person name="Vanoosthuyse V."/>
            <person name="Miege C."/>
            <person name="Dumas C."/>
            <person name="Cock J.M."/>
        </authorList>
    </citation>
    <scope>IDENTIFICATION</scope>
</reference>
<reference key="4">
    <citation type="journal article" date="2005" name="Plant Physiol.">
        <title>Genome organization of more than 300 defensin-like genes in Arabidopsis.</title>
        <authorList>
            <person name="Silverstein K.A.T."/>
            <person name="Graham M.A."/>
            <person name="Paape T.D."/>
            <person name="VandenBosch K.A."/>
        </authorList>
    </citation>
    <scope>GENE FAMILY</scope>
</reference>
<organism evidence="3">
    <name type="scientific">Arabidopsis thaliana</name>
    <name type="common">Mouse-ear cress</name>
    <dbReference type="NCBI Taxonomy" id="3702"/>
    <lineage>
        <taxon>Eukaryota</taxon>
        <taxon>Viridiplantae</taxon>
        <taxon>Streptophyta</taxon>
        <taxon>Embryophyta</taxon>
        <taxon>Tracheophyta</taxon>
        <taxon>Spermatophyta</taxon>
        <taxon>Magnoliopsida</taxon>
        <taxon>eudicotyledons</taxon>
        <taxon>Gunneridae</taxon>
        <taxon>Pentapetalae</taxon>
        <taxon>rosids</taxon>
        <taxon>malvids</taxon>
        <taxon>Brassicales</taxon>
        <taxon>Brassicaceae</taxon>
        <taxon>Camelineae</taxon>
        <taxon>Arabidopsis</taxon>
    </lineage>
</organism>
<comment type="subcellular location">
    <subcellularLocation>
        <location evidence="1">Secreted</location>
    </subcellularLocation>
</comment>
<comment type="similarity">
    <text evidence="3">Belongs to the DEFL family.</text>
</comment>
<protein>
    <recommendedName>
        <fullName>Putative defensin-like protein 186</fullName>
    </recommendedName>
    <alternativeName>
        <fullName>Putative low-molecular-weight cysteine-rich protein 40</fullName>
        <shortName>Protein LCR40</shortName>
    </alternativeName>
</protein>
<dbReference type="EMBL" id="AC005396">
    <property type="status" value="NOT_ANNOTATED_CDS"/>
    <property type="molecule type" value="Genomic_DNA"/>
</dbReference>
<dbReference type="EMBL" id="CP002685">
    <property type="protein sequence ID" value="AEC06352.1"/>
    <property type="molecule type" value="Genomic_DNA"/>
</dbReference>
<dbReference type="RefSeq" id="NP_001031356.1">
    <property type="nucleotide sequence ID" value="NM_001036279.1"/>
</dbReference>
<dbReference type="SMR" id="P82755"/>
<dbReference type="PaxDb" id="3702-AT2G14935.1"/>
<dbReference type="ProteomicsDB" id="224271"/>
<dbReference type="EnsemblPlants" id="AT2G14935.1">
    <property type="protein sequence ID" value="AT2G14935.1"/>
    <property type="gene ID" value="AT2G14935"/>
</dbReference>
<dbReference type="GeneID" id="3768117"/>
<dbReference type="Gramene" id="AT2G14935.1">
    <property type="protein sequence ID" value="AT2G14935.1"/>
    <property type="gene ID" value="AT2G14935"/>
</dbReference>
<dbReference type="KEGG" id="ath:AT2G14935"/>
<dbReference type="Araport" id="AT2G14935"/>
<dbReference type="TAIR" id="AT2G14935">
    <property type="gene designation" value="LCR40"/>
</dbReference>
<dbReference type="HOGENOM" id="CLU_199292_0_0_1"/>
<dbReference type="InParanoid" id="P82755"/>
<dbReference type="OMA" id="GEDKCKV"/>
<dbReference type="PhylomeDB" id="P82755"/>
<dbReference type="PRO" id="PR:P82755"/>
<dbReference type="Proteomes" id="UP000006548">
    <property type="component" value="Chromosome 2"/>
</dbReference>
<dbReference type="ExpressionAtlas" id="P82755">
    <property type="expression patterns" value="baseline and differential"/>
</dbReference>
<dbReference type="GO" id="GO:0005576">
    <property type="term" value="C:extracellular region"/>
    <property type="evidence" value="ECO:0007669"/>
    <property type="project" value="UniProtKB-SubCell"/>
</dbReference>
<dbReference type="GO" id="GO:0050832">
    <property type="term" value="P:defense response to fungus"/>
    <property type="evidence" value="ECO:0007669"/>
    <property type="project" value="UniProtKB-KW"/>
</dbReference>
<dbReference type="GO" id="GO:0031640">
    <property type="term" value="P:killing of cells of another organism"/>
    <property type="evidence" value="ECO:0007669"/>
    <property type="project" value="UniProtKB-KW"/>
</dbReference>
<accession>P82755</accession>
<sequence>MKNSSIILVLVFFFFISSSGEAKTCSDGWTCVGEDKCKVNCMAKHKGVGTCTLYIIPSFPAPITSYICDCMFDC</sequence>
<gene>
    <name type="primary">LCR40</name>
    <name type="ordered locus">At2g14935</name>
    <name type="ORF">T26I20</name>
</gene>
<name>DF186_ARATH</name>
<evidence type="ECO:0000250" key="1"/>
<evidence type="ECO:0000255" key="2"/>
<evidence type="ECO:0000305" key="3"/>
<proteinExistence type="inferred from homology"/>
<feature type="signal peptide" evidence="2">
    <location>
        <begin position="1"/>
        <end position="22"/>
    </location>
</feature>
<feature type="chain" id="PRO_0000017279" description="Putative defensin-like protein 186">
    <location>
        <begin position="23"/>
        <end position="74"/>
    </location>
</feature>
<feature type="disulfide bond" evidence="1">
    <location>
        <begin position="25"/>
        <end position="74"/>
    </location>
</feature>
<feature type="disulfide bond" evidence="1">
    <location>
        <begin position="31"/>
        <end position="51"/>
    </location>
</feature>
<feature type="disulfide bond" evidence="1">
    <location>
        <begin position="37"/>
        <end position="68"/>
    </location>
</feature>
<feature type="disulfide bond" evidence="1">
    <location>
        <begin position="41"/>
        <end position="70"/>
    </location>
</feature>